<dbReference type="EMBL" id="D49494">
    <property type="protein sequence ID" value="BAA08454.1"/>
    <property type="molecule type" value="mRNA"/>
</dbReference>
<dbReference type="PIR" id="JC4646">
    <property type="entry name" value="JC4646"/>
</dbReference>
<dbReference type="RefSeq" id="NP_077351.1">
    <property type="nucleotide sequence ID" value="NM_024375.1"/>
</dbReference>
<dbReference type="SMR" id="P55108"/>
<dbReference type="FunCoup" id="P55108">
    <property type="interactions" value="69"/>
</dbReference>
<dbReference type="STRING" id="10116.ENSRNOP00000075201"/>
<dbReference type="GlyCosmos" id="P55108">
    <property type="glycosylation" value="4 sites, No reported glycans"/>
</dbReference>
<dbReference type="GlyGen" id="P55108">
    <property type="glycosylation" value="4 sites"/>
</dbReference>
<dbReference type="PhosphoSitePlus" id="P55108"/>
<dbReference type="Ensembl" id="ENSRNOT00000081183.2">
    <property type="protein sequence ID" value="ENSRNOP00000069581.2"/>
    <property type="gene ID" value="ENSRNOG00000051993.2"/>
</dbReference>
<dbReference type="GeneID" id="79216"/>
<dbReference type="KEGG" id="rno:79216"/>
<dbReference type="UCSC" id="RGD:621512">
    <property type="organism name" value="rat"/>
</dbReference>
<dbReference type="AGR" id="RGD:621512"/>
<dbReference type="CTD" id="2662"/>
<dbReference type="RGD" id="621512">
    <property type="gene designation" value="Gdf10"/>
</dbReference>
<dbReference type="GeneTree" id="ENSGT00940000157214"/>
<dbReference type="InParanoid" id="P55108"/>
<dbReference type="OMA" id="VHMLKLY"/>
<dbReference type="OrthoDB" id="5987191at2759"/>
<dbReference type="PhylomeDB" id="P55108"/>
<dbReference type="PRO" id="PR:P55108"/>
<dbReference type="Proteomes" id="UP000002494">
    <property type="component" value="Chromosome 16"/>
</dbReference>
<dbReference type="GO" id="GO:0005615">
    <property type="term" value="C:extracellular space"/>
    <property type="evidence" value="ECO:0000314"/>
    <property type="project" value="RGD"/>
</dbReference>
<dbReference type="GO" id="GO:0005125">
    <property type="term" value="F:cytokine activity"/>
    <property type="evidence" value="ECO:0000318"/>
    <property type="project" value="GO_Central"/>
</dbReference>
<dbReference type="GO" id="GO:0008083">
    <property type="term" value="F:growth factor activity"/>
    <property type="evidence" value="ECO:0007669"/>
    <property type="project" value="UniProtKB-KW"/>
</dbReference>
<dbReference type="GO" id="GO:0021549">
    <property type="term" value="P:cerebellum development"/>
    <property type="evidence" value="ECO:0000270"/>
    <property type="project" value="RGD"/>
</dbReference>
<dbReference type="GO" id="GO:0045444">
    <property type="term" value="P:fat cell differentiation"/>
    <property type="evidence" value="ECO:0000266"/>
    <property type="project" value="RGD"/>
</dbReference>
<dbReference type="GO" id="GO:0030279">
    <property type="term" value="P:negative regulation of ossification"/>
    <property type="evidence" value="ECO:0000266"/>
    <property type="project" value="RGD"/>
</dbReference>
<dbReference type="GO" id="GO:0001649">
    <property type="term" value="P:osteoblast differentiation"/>
    <property type="evidence" value="ECO:0000270"/>
    <property type="project" value="RGD"/>
</dbReference>
<dbReference type="GO" id="GO:0042698">
    <property type="term" value="P:ovulation cycle"/>
    <property type="evidence" value="ECO:0000270"/>
    <property type="project" value="RGD"/>
</dbReference>
<dbReference type="GO" id="GO:0045669">
    <property type="term" value="P:positive regulation of osteoblast differentiation"/>
    <property type="evidence" value="ECO:0000314"/>
    <property type="project" value="RGD"/>
</dbReference>
<dbReference type="GO" id="GO:0030278">
    <property type="term" value="P:regulation of ossification"/>
    <property type="evidence" value="ECO:0000270"/>
    <property type="project" value="RGD"/>
</dbReference>
<dbReference type="GO" id="GO:1904373">
    <property type="term" value="P:response to kainic acid"/>
    <property type="evidence" value="ECO:0000270"/>
    <property type="project" value="RGD"/>
</dbReference>
<dbReference type="GO" id="GO:0071559">
    <property type="term" value="P:response to transforming growth factor beta"/>
    <property type="evidence" value="ECO:0000270"/>
    <property type="project" value="RGD"/>
</dbReference>
<dbReference type="CDD" id="cd19394">
    <property type="entry name" value="TGF_beta_GDF10"/>
    <property type="match status" value="1"/>
</dbReference>
<dbReference type="FunFam" id="2.10.90.10:FF:000008">
    <property type="entry name" value="Bone morphogenetic protein 3"/>
    <property type="match status" value="1"/>
</dbReference>
<dbReference type="Gene3D" id="2.10.90.10">
    <property type="entry name" value="Cystine-knot cytokines"/>
    <property type="match status" value="1"/>
</dbReference>
<dbReference type="InterPro" id="IPR017197">
    <property type="entry name" value="BMP3/BMP3B"/>
</dbReference>
<dbReference type="InterPro" id="IPR029034">
    <property type="entry name" value="Cystine-knot_cytokine"/>
</dbReference>
<dbReference type="InterPro" id="IPR001839">
    <property type="entry name" value="TGF-b_C"/>
</dbReference>
<dbReference type="InterPro" id="IPR015615">
    <property type="entry name" value="TGF-beta-rel"/>
</dbReference>
<dbReference type="InterPro" id="IPR017948">
    <property type="entry name" value="TGFb_CS"/>
</dbReference>
<dbReference type="PANTHER" id="PTHR11848:SF145">
    <property type="entry name" value="GROWTH_DIFFERENTIATION FACTOR 10"/>
    <property type="match status" value="1"/>
</dbReference>
<dbReference type="PANTHER" id="PTHR11848">
    <property type="entry name" value="TGF-BETA FAMILY"/>
    <property type="match status" value="1"/>
</dbReference>
<dbReference type="Pfam" id="PF00019">
    <property type="entry name" value="TGF_beta"/>
    <property type="match status" value="1"/>
</dbReference>
<dbReference type="PIRSF" id="PIRSF037403">
    <property type="entry name" value="BMP3/GDF10"/>
    <property type="match status" value="1"/>
</dbReference>
<dbReference type="SMART" id="SM00204">
    <property type="entry name" value="TGFB"/>
    <property type="match status" value="1"/>
</dbReference>
<dbReference type="SUPFAM" id="SSF57501">
    <property type="entry name" value="Cystine-knot cytokines"/>
    <property type="match status" value="1"/>
</dbReference>
<dbReference type="PROSITE" id="PS00250">
    <property type="entry name" value="TGF_BETA_1"/>
    <property type="match status" value="1"/>
</dbReference>
<dbReference type="PROSITE" id="PS51362">
    <property type="entry name" value="TGF_BETA_2"/>
    <property type="match status" value="1"/>
</dbReference>
<feature type="signal peptide" evidence="3">
    <location>
        <begin position="1"/>
        <end position="29"/>
    </location>
</feature>
<feature type="propeptide" id="PRO_0000033848" evidence="3">
    <location>
        <begin position="30"/>
        <end position="366"/>
    </location>
</feature>
<feature type="chain" id="PRO_0000033849" description="Growth/differentiation factor 10">
    <location>
        <begin position="367"/>
        <end position="476"/>
    </location>
</feature>
<feature type="region of interest" description="Disordered" evidence="4">
    <location>
        <begin position="268"/>
        <end position="305"/>
    </location>
</feature>
<feature type="region of interest" description="Disordered" evidence="4">
    <location>
        <begin position="330"/>
        <end position="358"/>
    </location>
</feature>
<feature type="glycosylation site" description="N-linked (GlcNAc...) asparagine" evidence="3">
    <location>
        <position position="114"/>
    </location>
</feature>
<feature type="glycosylation site" description="N-linked (GlcNAc...) asparagine" evidence="3">
    <location>
        <position position="152"/>
    </location>
</feature>
<feature type="glycosylation site" description="N-linked (GlcNAc...) asparagine" evidence="3">
    <location>
        <position position="277"/>
    </location>
</feature>
<feature type="glycosylation site" description="N-linked (GlcNAc...) asparagine" evidence="3">
    <location>
        <position position="467"/>
    </location>
</feature>
<feature type="disulfide bond" evidence="1">
    <location>
        <begin position="374"/>
        <end position="441"/>
    </location>
</feature>
<feature type="disulfide bond" evidence="1">
    <location>
        <begin position="403"/>
        <end position="473"/>
    </location>
</feature>
<feature type="disulfide bond" evidence="1">
    <location>
        <begin position="407"/>
        <end position="475"/>
    </location>
</feature>
<feature type="disulfide bond" description="Interchain" evidence="1">
    <location>
        <position position="440"/>
    </location>
</feature>
<keyword id="KW-0165">Cleavage on pair of basic residues</keyword>
<keyword id="KW-0202">Cytokine</keyword>
<keyword id="KW-1015">Disulfide bond</keyword>
<keyword id="KW-0325">Glycoprotein</keyword>
<keyword id="KW-0339">Growth factor</keyword>
<keyword id="KW-0892">Osteogenesis</keyword>
<keyword id="KW-1185">Reference proteome</keyword>
<keyword id="KW-0964">Secreted</keyword>
<keyword id="KW-0732">Signal</keyword>
<proteinExistence type="evidence at transcript level"/>
<accession>P55108</accession>
<protein>
    <recommendedName>
        <fullName>Growth/differentiation factor 10</fullName>
        <shortName>GDF-10</shortName>
    </recommendedName>
    <alternativeName>
        <fullName>Bone morphogenetic protein 3B</fullName>
        <shortName>BMP-3B</shortName>
    </alternativeName>
    <alternativeName>
        <fullName>Bone-inducing protein</fullName>
        <shortName>BIP</shortName>
    </alternativeName>
</protein>
<evidence type="ECO:0000250" key="1"/>
<evidence type="ECO:0000250" key="2">
    <source>
        <dbReference type="UniProtKB" id="P97737"/>
    </source>
</evidence>
<evidence type="ECO:0000255" key="3"/>
<evidence type="ECO:0000256" key="4">
    <source>
        <dbReference type="SAM" id="MobiDB-lite"/>
    </source>
</evidence>
<evidence type="ECO:0000269" key="5">
    <source>
    </source>
</evidence>
<evidence type="ECO:0000305" key="6"/>
<evidence type="ECO:0000312" key="7">
    <source>
        <dbReference type="RGD" id="621512"/>
    </source>
</evidence>
<gene>
    <name evidence="7" type="primary">Gdf10</name>
    <name type="synonym">Bmp3b</name>
</gene>
<sequence>MAPGLARISLRSQLLPLVPLLLLLRGAGCGHRVPSWSSLPSAADSVQRDRDLQQSPGDAAAALGPGAQDIVAVHMLRLYEKYNRRGAPPGGGNTVRSFRARLDVIDQKPVYFFNLTSMQDSEMILTATFHFYSEPPRWPRAREVFCKPRAKNASCRLLTPGLPARLHLIFRSLSQNTATQGLLRGAMALTPPPRGLWQAKDISSIIKAARRDGELLLSAQLDSGEKDLGVPRPSSHMPYILVYANDLAISEPNSVAVTLQRYDPFPAGDFEPGAAPNSSADPRVRRAAQVSKPLQDNELPGLDERPAPALHAQHFHKHEFWSSPFRALKPRTGRKDRKKKDQDTFTPSSSQVLDFDEKTMQKARRRQWDEPRVCSRRYLKVDFADIGWNEWIISPKSFDAYYCAGACEFPMPKIVRPSNHATIQSIVRAVGIVPGIPEPCCVPDKMNSLGVLFLDENRNVVLKVYPNMSVETCACR</sequence>
<name>GDF10_RAT</name>
<organism>
    <name type="scientific">Rattus norvegicus</name>
    <name type="common">Rat</name>
    <dbReference type="NCBI Taxonomy" id="10116"/>
    <lineage>
        <taxon>Eukaryota</taxon>
        <taxon>Metazoa</taxon>
        <taxon>Chordata</taxon>
        <taxon>Craniata</taxon>
        <taxon>Vertebrata</taxon>
        <taxon>Euteleostomi</taxon>
        <taxon>Mammalia</taxon>
        <taxon>Eutheria</taxon>
        <taxon>Euarchontoglires</taxon>
        <taxon>Glires</taxon>
        <taxon>Rodentia</taxon>
        <taxon>Myomorpha</taxon>
        <taxon>Muroidea</taxon>
        <taxon>Muridae</taxon>
        <taxon>Murinae</taxon>
        <taxon>Rattus</taxon>
    </lineage>
</organism>
<comment type="function">
    <text evidence="2">Growth factor involved in osteogenesis and adipogenesis. Plays an inhibitory role in the process of osteoblast differentiation via SMAD2/3 pathway. Plays an inhibitory role in the process of adipogenesis.</text>
</comment>
<comment type="subunit">
    <text evidence="2">Homodimer or heterodimer. Can form a non-covalent complex of the mature region and the pro-region.</text>
</comment>
<comment type="subcellular location">
    <subcellularLocation>
        <location evidence="2">Secreted</location>
    </subcellularLocation>
</comment>
<comment type="tissue specificity">
    <text evidence="5">Costa, costicartilage, femur, calvaria, trachea, aorta and brain. Predominantly in the cerebellum.</text>
</comment>
<comment type="similarity">
    <text evidence="6">Belongs to the TGF-beta family.</text>
</comment>
<reference key="1">
    <citation type="journal article" date="1996" name="Biochem. Biophys. Res. Commun.">
        <title>Identification of rat bone morphogenetic protein-3b (BMP-3b), a new member of BMP-3.</title>
        <authorList>
            <person name="Takao M."/>
            <person name="Hino J."/>
            <person name="Takeshita N."/>
            <person name="Konno Y."/>
            <person name="Nishizawa T."/>
            <person name="Matsuo H."/>
            <person name="Kangawa K."/>
        </authorList>
    </citation>
    <scope>NUCLEOTIDE SEQUENCE [MRNA]</scope>
    <scope>TISSUE SPECIFICITY</scope>
    <source>
        <strain>Sprague-Dawley</strain>
        <tissue>Femur</tissue>
    </source>
</reference>